<accession>Q9U7C9</accession>
<accession>C7FZX6</accession>
<accession>Q55BM2</accession>
<accession>Q55BM3</accession>
<accession>Q6GW01</accession>
<organism>
    <name type="scientific">Dictyostelium discoideum</name>
    <name type="common">Social amoeba</name>
    <dbReference type="NCBI Taxonomy" id="44689"/>
    <lineage>
        <taxon>Eukaryota</taxon>
        <taxon>Amoebozoa</taxon>
        <taxon>Evosea</taxon>
        <taxon>Eumycetozoa</taxon>
        <taxon>Dictyostelia</taxon>
        <taxon>Dictyosteliales</taxon>
        <taxon>Dictyosteliaceae</taxon>
        <taxon>Dictyostelium</taxon>
    </lineage>
</organism>
<comment type="subunit">
    <text evidence="3 6">Interacts with calmodulin and CBPD1 in the presence of Ca(2+).</text>
</comment>
<comment type="interaction">
    <interactant intactId="EBI-530708">
        <id>Q9U7C9</id>
    </interactant>
    <interactant intactId="EBI-531591">
        <id>Q54RF4</id>
        <label>cbpD1</label>
    </interactant>
    <organismsDiffer>false</organismsDiffer>
    <experiments>2</experiments>
</comment>
<comment type="subcellular location">
    <subcellularLocation>
        <location evidence="3 8">Nucleus</location>
    </subcellularLocation>
</comment>
<comment type="alternative products">
    <event type="alternative splicing"/>
    <isoform>
        <id>Q9U7C9-1</id>
        <name evidence="7">2</name>
        <name evidence="11">numA2</name>
        <name evidence="7">NumB</name>
        <sequence type="displayed"/>
    </isoform>
    <isoform>
        <id>Q9U7C9-2</id>
        <name evidence="3">1</name>
        <name evidence="11">numA1</name>
        <name evidence="3">NumA</name>
        <sequence type="described" ref="VSP_052481"/>
    </isoform>
</comment>
<comment type="developmental stage">
    <text evidence="3 4 5 7">Isoform 1 is expressed throughout development. Isoform 2 is expressed at low level during vegetative growth. Expression of isoform 2 increases rapidly during aggregation (1-4 hours) and remains high throughout development.</text>
</comment>
<comment type="disruption phenotype">
    <text evidence="3">Mutants lacking the DEED domain form multinucleated cells.</text>
</comment>
<comment type="sequence caution" evidence="10">
    <conflict type="erroneous gene model prediction">
        <sequence resource="EMBL-CDS" id="EEU04155"/>
    </conflict>
</comment>
<protein>
    <recommendedName>
        <fullName>Nucleomorphin</fullName>
    </recommendedName>
    <alternativeName>
        <fullName>Calmodulin-binding protein A</fullName>
    </alternativeName>
    <alternativeName>
        <fullName>Calmodulin-binding protein CaM-BP38</fullName>
    </alternativeName>
</protein>
<proteinExistence type="evidence at protein level"/>
<keyword id="KW-0025">Alternative splicing</keyword>
<keyword id="KW-0106">Calcium</keyword>
<keyword id="KW-0112">Calmodulin-binding</keyword>
<keyword id="KW-0539">Nucleus</keyword>
<keyword id="KW-1185">Reference proteome</keyword>
<keyword id="KW-0677">Repeat</keyword>
<feature type="chain" id="PRO_0000293632" description="Nucleomorphin">
    <location>
        <begin position="1"/>
        <end position="756"/>
    </location>
</feature>
<feature type="domain" description="BRCT" evidence="1">
    <location>
        <begin position="124"/>
        <end position="216"/>
    </location>
</feature>
<feature type="region of interest" description="Disordered" evidence="2">
    <location>
        <begin position="1"/>
        <end position="113"/>
    </location>
</feature>
<feature type="region of interest" description="Disordered" evidence="2">
    <location>
        <begin position="229"/>
        <end position="251"/>
    </location>
</feature>
<feature type="region of interest" description="Disordered" evidence="2">
    <location>
        <begin position="272"/>
        <end position="298"/>
    </location>
</feature>
<feature type="region of interest" description="Disordered" evidence="2">
    <location>
        <begin position="359"/>
        <end position="403"/>
    </location>
</feature>
<feature type="region of interest" description="Disordered" evidence="2">
    <location>
        <begin position="422"/>
        <end position="463"/>
    </location>
</feature>
<feature type="region of interest" description="Calmodulin binding" evidence="3">
    <location>
        <begin position="495"/>
        <end position="512"/>
    </location>
</feature>
<feature type="region of interest" description="Disordered" evidence="2">
    <location>
        <begin position="514"/>
        <end position="587"/>
    </location>
</feature>
<feature type="region of interest" description="DEED region" evidence="3">
    <location>
        <begin position="537"/>
        <end position="588"/>
    </location>
</feature>
<feature type="region of interest" description="Calmodulin binding" evidence="3">
    <location>
        <begin position="589"/>
        <end position="606"/>
    </location>
</feature>
<feature type="region of interest" description="Calmodulin binding" evidence="3">
    <location>
        <begin position="596"/>
        <end position="613"/>
    </location>
</feature>
<feature type="region of interest" description="Disordered" evidence="2">
    <location>
        <begin position="613"/>
        <end position="639"/>
    </location>
</feature>
<feature type="region of interest" description="Disordered" evidence="2">
    <location>
        <begin position="660"/>
        <end position="700"/>
    </location>
</feature>
<feature type="short sequence motif" description="Nuclear localization signal" evidence="8">
    <location>
        <begin position="464"/>
        <end position="480"/>
    </location>
</feature>
<feature type="compositionally biased region" description="Polar residues" evidence="2">
    <location>
        <begin position="1"/>
        <end position="10"/>
    </location>
</feature>
<feature type="compositionally biased region" description="Low complexity" evidence="2">
    <location>
        <begin position="16"/>
        <end position="66"/>
    </location>
</feature>
<feature type="compositionally biased region" description="Low complexity" evidence="2">
    <location>
        <begin position="75"/>
        <end position="94"/>
    </location>
</feature>
<feature type="compositionally biased region" description="Polar residues" evidence="2">
    <location>
        <begin position="95"/>
        <end position="113"/>
    </location>
</feature>
<feature type="compositionally biased region" description="Low complexity" evidence="2">
    <location>
        <begin position="285"/>
        <end position="298"/>
    </location>
</feature>
<feature type="compositionally biased region" description="Low complexity" evidence="2">
    <location>
        <begin position="364"/>
        <end position="401"/>
    </location>
</feature>
<feature type="compositionally biased region" description="Low complexity" evidence="2">
    <location>
        <begin position="422"/>
        <end position="432"/>
    </location>
</feature>
<feature type="compositionally biased region" description="Basic residues" evidence="2">
    <location>
        <begin position="448"/>
        <end position="459"/>
    </location>
</feature>
<feature type="compositionally biased region" description="Polar residues" evidence="2">
    <location>
        <begin position="514"/>
        <end position="529"/>
    </location>
</feature>
<feature type="compositionally biased region" description="Acidic residues" evidence="2">
    <location>
        <begin position="536"/>
        <end position="587"/>
    </location>
</feature>
<feature type="compositionally biased region" description="Polar residues" evidence="2">
    <location>
        <begin position="668"/>
        <end position="691"/>
    </location>
</feature>
<feature type="splice variant" id="VSP_052481" description="In isoform 1." evidence="9">
    <location>
        <begin position="1"/>
        <end position="254"/>
    </location>
</feature>
<name>NUCMR_DICDI</name>
<gene>
    <name type="primary">numA</name>
    <name evidence="11" type="synonym">cmbA</name>
    <name evidence="12" type="synonym">numB</name>
    <name type="ORF">DDB_G0269114</name>
</gene>
<evidence type="ECO:0000255" key="1">
    <source>
        <dbReference type="PROSITE-ProRule" id="PRU00033"/>
    </source>
</evidence>
<evidence type="ECO:0000256" key="2">
    <source>
        <dbReference type="SAM" id="MobiDB-lite"/>
    </source>
</evidence>
<evidence type="ECO:0000269" key="3">
    <source>
    </source>
</evidence>
<evidence type="ECO:0000269" key="4">
    <source>
    </source>
</evidence>
<evidence type="ECO:0000269" key="5">
    <source>
    </source>
</evidence>
<evidence type="ECO:0000269" key="6">
    <source>
    </source>
</evidence>
<evidence type="ECO:0000269" key="7">
    <source>
    </source>
</evidence>
<evidence type="ECO:0000269" key="8">
    <source>
    </source>
</evidence>
<evidence type="ECO:0000303" key="9">
    <source>
    </source>
</evidence>
<evidence type="ECO:0000305" key="10"/>
<evidence type="ECO:0000312" key="11">
    <source>
        <dbReference type="dictyBase" id="DDB_G0269114"/>
    </source>
</evidence>
<evidence type="ECO:0000312" key="12">
    <source>
        <dbReference type="EMBL" id="AAT48090.1"/>
    </source>
</evidence>
<evidence type="ECO:0000312" key="13">
    <source>
        <dbReference type="EMBL" id="EAL71906.1"/>
    </source>
</evidence>
<dbReference type="EMBL" id="AF140042">
    <property type="protein sequence ID" value="AAD56608.2"/>
    <property type="molecule type" value="mRNA"/>
</dbReference>
<dbReference type="EMBL" id="AY631855">
    <property type="protein sequence ID" value="AAT48090.1"/>
    <property type="molecule type" value="mRNA"/>
</dbReference>
<dbReference type="EMBL" id="AAFI02000005">
    <property type="protein sequence ID" value="EAL71906.1"/>
    <property type="molecule type" value="Genomic_DNA"/>
</dbReference>
<dbReference type="EMBL" id="AAFI02000005">
    <property type="protein sequence ID" value="EAL71907.2"/>
    <property type="molecule type" value="Genomic_DNA"/>
</dbReference>
<dbReference type="EMBL" id="AAFI02000005">
    <property type="protein sequence ID" value="EEU04155.1"/>
    <property type="status" value="ALT_SEQ"/>
    <property type="molecule type" value="Genomic_DNA"/>
</dbReference>
<dbReference type="RefSeq" id="XP_001134480.1">
    <property type="nucleotide sequence ID" value="XM_001134480.1"/>
</dbReference>
<dbReference type="RefSeq" id="XP_002649205.1">
    <property type="nucleotide sequence ID" value="XM_002649159.1"/>
</dbReference>
<dbReference type="RefSeq" id="XP_646808.2">
    <property type="nucleotide sequence ID" value="XM_641716.2"/>
</dbReference>
<dbReference type="FunCoup" id="Q9U7C9">
    <property type="interactions" value="362"/>
</dbReference>
<dbReference type="IntAct" id="Q9U7C9">
    <property type="interactions" value="1"/>
</dbReference>
<dbReference type="STRING" id="44689.Q9U7C9"/>
<dbReference type="PaxDb" id="44689-DDB0231257"/>
<dbReference type="EnsemblProtists" id="EAL71906">
    <property type="protein sequence ID" value="EAL71906"/>
    <property type="gene ID" value="DDB_G0269114"/>
</dbReference>
<dbReference type="EnsemblProtists" id="EAL71907">
    <property type="protein sequence ID" value="EAL71907"/>
    <property type="gene ID" value="DDB_G0269114"/>
</dbReference>
<dbReference type="EnsemblProtists" id="EEU04155">
    <property type="protein sequence ID" value="EEU04155"/>
    <property type="gene ID" value="DDB_G0269114"/>
</dbReference>
<dbReference type="GeneID" id="8617781"/>
<dbReference type="KEGG" id="ddi:DDB_G0269114"/>
<dbReference type="dictyBase" id="DDB_G0269114">
    <property type="gene designation" value="numA"/>
</dbReference>
<dbReference type="VEuPathDB" id="AmoebaDB:DDB_G0269114"/>
<dbReference type="eggNOG" id="ENOG502RFA6">
    <property type="taxonomic scope" value="Eukaryota"/>
</dbReference>
<dbReference type="HOGENOM" id="CLU_368610_0_0_1"/>
<dbReference type="InParanoid" id="Q9U7C9"/>
<dbReference type="OMA" id="EYVHYCA"/>
<dbReference type="PRO" id="PR:Q9U7C9"/>
<dbReference type="Proteomes" id="UP000002195">
    <property type="component" value="Chromosome 1"/>
</dbReference>
<dbReference type="GO" id="GO:0005813">
    <property type="term" value="C:centrosome"/>
    <property type="evidence" value="ECO:0000314"/>
    <property type="project" value="dictyBase"/>
</dbReference>
<dbReference type="GO" id="GO:0005635">
    <property type="term" value="C:nuclear envelope"/>
    <property type="evidence" value="ECO:0000314"/>
    <property type="project" value="dictyBase"/>
</dbReference>
<dbReference type="GO" id="GO:0005730">
    <property type="term" value="C:nucleolus"/>
    <property type="evidence" value="ECO:0000314"/>
    <property type="project" value="dictyBase"/>
</dbReference>
<dbReference type="GO" id="GO:0005654">
    <property type="term" value="C:nucleoplasm"/>
    <property type="evidence" value="ECO:0000314"/>
    <property type="project" value="dictyBase"/>
</dbReference>
<dbReference type="GO" id="GO:0005516">
    <property type="term" value="F:calmodulin binding"/>
    <property type="evidence" value="ECO:0000353"/>
    <property type="project" value="dictyBase"/>
</dbReference>
<dbReference type="GO" id="GO:0007088">
    <property type="term" value="P:regulation of mitotic nuclear division"/>
    <property type="evidence" value="ECO:0000315"/>
    <property type="project" value="dictyBase"/>
</dbReference>
<dbReference type="CDD" id="cd00027">
    <property type="entry name" value="BRCT"/>
    <property type="match status" value="1"/>
</dbReference>
<dbReference type="Gene3D" id="3.40.50.10190">
    <property type="entry name" value="BRCT domain"/>
    <property type="match status" value="1"/>
</dbReference>
<dbReference type="InterPro" id="IPR016024">
    <property type="entry name" value="ARM-type_fold"/>
</dbReference>
<dbReference type="InterPro" id="IPR001357">
    <property type="entry name" value="BRCT_dom"/>
</dbReference>
<dbReference type="InterPro" id="IPR036420">
    <property type="entry name" value="BRCT_dom_sf"/>
</dbReference>
<dbReference type="PANTHER" id="PTHR28034:SF1">
    <property type="entry name" value="NUCLEOMORPHIN"/>
    <property type="match status" value="1"/>
</dbReference>
<dbReference type="PANTHER" id="PTHR28034">
    <property type="entry name" value="SET1 COMPLEX COMPONENT SHG1"/>
    <property type="match status" value="1"/>
</dbReference>
<dbReference type="Pfam" id="PF00533">
    <property type="entry name" value="BRCT"/>
    <property type="match status" value="1"/>
</dbReference>
<dbReference type="SMART" id="SM00292">
    <property type="entry name" value="BRCT"/>
    <property type="match status" value="1"/>
</dbReference>
<dbReference type="SUPFAM" id="SSF48371">
    <property type="entry name" value="ARM repeat"/>
    <property type="match status" value="1"/>
</dbReference>
<dbReference type="SUPFAM" id="SSF52113">
    <property type="entry name" value="BRCT domain"/>
    <property type="match status" value="1"/>
</dbReference>
<dbReference type="PROSITE" id="PS50172">
    <property type="entry name" value="BRCT"/>
    <property type="match status" value="1"/>
</dbReference>
<sequence>MDLDYSSDNSRLVADNQNNKTNTKNQSQLSTSSQIPQTSQSYQQQQQHNQQQQQQQQQKQNSRPSSPKTIQAKVNNNNNNNNNNNNNNNNNNNNGATISHPPTSQSNEDLSSSAEIHHDDSAQLNSNIFENLGFVIDITINLKRKMELVKIIKKNGGKSCYSCTKATHLITTKQGYLEKTQKVTQAISLGIPILVKEYVHYCAFKKELLGVENYLVSSLILNPTSTTLNSSQDLIEKPNEEEPQNGTINEQPIAMTIDNTLESNKPIETIQPSSLEKQEPKETELQTQQQPQTELKSELEPQQLQLIQEKDKNINNLSIDSNHMDTSKIEAGNNISNQTQSNIISSVVQTIEPLKECNKIDLDNNNNNNNNNNNNNNNNNNNNNNNNNNNNNNSSSNNKNKNNVDEAQEGLNINSVMDVHLTSSTSSTLSSSDNQDNELLRDEGTTPKSKKKFSQKKNHLLNLKKSYQDPEIIAHSRPRKSSGGVSLVEALSDHANYISNLDGFKYYARANKSSLNSNATTSGGNNRSIKLNEYKYDDEEEDEEDEDEEDEEEDEEEEEEEEEEEEDYDDEDLNDEESDEDDFDSDEDVSRFIKGKLLQKQQKIYKDLERFEHSRQQQHHHHQSSQVNSSKPRSRSHSRDYIESEIAKYLLNNSEKQIPLSPTKKRSLSNQFHQDGGNNTTDGNLFNNFSTNGGGNRTNIDDSIKQSILESPSSSSLKSSKSKKSKKPFLPPLSTLVHILVTFIILSAFFMSLPSN</sequence>
<reference evidence="10 12" key="1">
    <citation type="journal article" date="2002" name="J. Biol. Chem.">
        <title>Nucleomorphin. A novel, acidic, nuclear calmodulin-binding protein from Dictyostelium that regulates nuclear number.</title>
        <authorList>
            <person name="Myre M.A."/>
            <person name="O'Day D.H."/>
        </authorList>
    </citation>
    <scope>NUCLEOTIDE SEQUENCE [MRNA] (ISOFORM 1)</scope>
    <scope>INTERACTION WITH CALMODULIN</scope>
    <scope>SUBCELLULAR LOCATION</scope>
    <scope>DEVELOPMENTAL STAGE</scope>
    <scope>DOMAIN DEED MOTIF</scope>
    <scope>DISRUPTION PHENOTYPE</scope>
</reference>
<reference evidence="12" key="2">
    <citation type="journal article" date="2004" name="Biochim. Biophys. Acta">
        <title>Dictyostelium nucleomorphin is a member of the BRCT-domain family of cell cycle checkpoint proteins.</title>
        <authorList>
            <person name="Myre M.A."/>
            <person name="O'Day D.H."/>
        </authorList>
    </citation>
    <scope>NUCLEOTIDE SEQUENCE [MRNA] (ISOFORM 2)</scope>
    <scope>DEVELOPMENTAL STAGE</scope>
</reference>
<reference evidence="13" key="3">
    <citation type="journal article" date="2005" name="Nature">
        <title>The genome of the social amoeba Dictyostelium discoideum.</title>
        <authorList>
            <person name="Eichinger L."/>
            <person name="Pachebat J.A."/>
            <person name="Gloeckner G."/>
            <person name="Rajandream M.A."/>
            <person name="Sucgang R."/>
            <person name="Berriman M."/>
            <person name="Song J."/>
            <person name="Olsen R."/>
            <person name="Szafranski K."/>
            <person name="Xu Q."/>
            <person name="Tunggal B."/>
            <person name="Kummerfeld S."/>
            <person name="Madera M."/>
            <person name="Konfortov B.A."/>
            <person name="Rivero F."/>
            <person name="Bankier A.T."/>
            <person name="Lehmann R."/>
            <person name="Hamlin N."/>
            <person name="Davies R."/>
            <person name="Gaudet P."/>
            <person name="Fey P."/>
            <person name="Pilcher K."/>
            <person name="Chen G."/>
            <person name="Saunders D."/>
            <person name="Sodergren E.J."/>
            <person name="Davis P."/>
            <person name="Kerhornou A."/>
            <person name="Nie X."/>
            <person name="Hall N."/>
            <person name="Anjard C."/>
            <person name="Hemphill L."/>
            <person name="Bason N."/>
            <person name="Farbrother P."/>
            <person name="Desany B."/>
            <person name="Just E."/>
            <person name="Morio T."/>
            <person name="Rost R."/>
            <person name="Churcher C.M."/>
            <person name="Cooper J."/>
            <person name="Haydock S."/>
            <person name="van Driessche N."/>
            <person name="Cronin A."/>
            <person name="Goodhead I."/>
            <person name="Muzny D.M."/>
            <person name="Mourier T."/>
            <person name="Pain A."/>
            <person name="Lu M."/>
            <person name="Harper D."/>
            <person name="Lindsay R."/>
            <person name="Hauser H."/>
            <person name="James K.D."/>
            <person name="Quiles M."/>
            <person name="Madan Babu M."/>
            <person name="Saito T."/>
            <person name="Buchrieser C."/>
            <person name="Wardroper A."/>
            <person name="Felder M."/>
            <person name="Thangavelu M."/>
            <person name="Johnson D."/>
            <person name="Knights A."/>
            <person name="Loulseged H."/>
            <person name="Mungall K.L."/>
            <person name="Oliver K."/>
            <person name="Price C."/>
            <person name="Quail M.A."/>
            <person name="Urushihara H."/>
            <person name="Hernandez J."/>
            <person name="Rabbinowitsch E."/>
            <person name="Steffen D."/>
            <person name="Sanders M."/>
            <person name="Ma J."/>
            <person name="Kohara Y."/>
            <person name="Sharp S."/>
            <person name="Simmonds M.N."/>
            <person name="Spiegler S."/>
            <person name="Tivey A."/>
            <person name="Sugano S."/>
            <person name="White B."/>
            <person name="Walker D."/>
            <person name="Woodward J.R."/>
            <person name="Winckler T."/>
            <person name="Tanaka Y."/>
            <person name="Shaulsky G."/>
            <person name="Schleicher M."/>
            <person name="Weinstock G.M."/>
            <person name="Rosenthal A."/>
            <person name="Cox E.C."/>
            <person name="Chisholm R.L."/>
            <person name="Gibbs R.A."/>
            <person name="Loomis W.F."/>
            <person name="Platzer M."/>
            <person name="Kay R.R."/>
            <person name="Williams J.G."/>
            <person name="Dear P.H."/>
            <person name="Noegel A.A."/>
            <person name="Barrell B.G."/>
            <person name="Kuspa A."/>
        </authorList>
    </citation>
    <scope>NUCLEOTIDE SEQUENCE [LARGE SCALE GENOMIC DNA]</scope>
    <source>
        <strain evidence="13">AX4</strain>
    </source>
</reference>
<reference evidence="10" key="4">
    <citation type="journal article" date="2002" name="Development">
        <title>A transcriptional profile of multicellular development in Dictyostelium discoideum.</title>
        <authorList>
            <person name="Van Driessche N."/>
            <person name="Shaw C."/>
            <person name="Katoh M."/>
            <person name="Morio T."/>
            <person name="Sucgang R."/>
            <person name="Ibarra M."/>
            <person name="Kuwayama H."/>
            <person name="Saito T."/>
            <person name="Urushihara H."/>
            <person name="Maeda M."/>
            <person name="Takeuchi I."/>
            <person name="Ochiai H."/>
            <person name="Eaton W."/>
            <person name="Tollett J."/>
            <person name="Halter J."/>
            <person name="Kuspa A."/>
            <person name="Tanaka Y."/>
            <person name="Shaulsky G."/>
        </authorList>
    </citation>
    <scope>DEVELOPMENTAL STAGE</scope>
</reference>
<reference evidence="10" key="5">
    <citation type="journal article" date="2003" name="Eukaryot. Cell">
        <title>Genome-wide expression analyses of gene regulation during early development of Dictyostelium discoideum.</title>
        <authorList>
            <person name="Iranfar N."/>
            <person name="Fuller D."/>
            <person name="Loomis W.F."/>
        </authorList>
    </citation>
    <scope>DEVELOPMENTAL STAGE</scope>
</reference>
<reference evidence="10" key="6">
    <citation type="journal article" date="2004" name="Biochem. Biophys. Res. Commun.">
        <title>Dictyostelium calcium-binding protein 4a interacts with nucleomorphin, a BRCT-domain protein that regulates nuclear number.</title>
        <authorList>
            <person name="Myre M.A."/>
            <person name="O'Day D.H."/>
        </authorList>
    </citation>
    <scope>INTERACTION WITH CBPD1</scope>
</reference>
<reference evidence="10" key="7">
    <citation type="journal article" date="2005" name="Biochem. Biophys. Res. Commun.">
        <title>An N-terminal nuclear localization sequence but not the calmodulin-binding domain mediates nuclear localization of nucleomorphin, a protein that regulates nuclear number in Dictyostelium.</title>
        <authorList>
            <person name="Myre M.A."/>
            <person name="O'Day D.H."/>
        </authorList>
    </citation>
    <scope>NUCLEAR LOCALIZATION SIGNAL</scope>
    <scope>SUBCELLULAR LOCATION</scope>
</reference>